<reference key="1">
    <citation type="journal article" date="2007" name="Proc. Natl. Acad. Sci. U.S.A.">
        <title>Genome and proteome of long-chain alkane degrading Geobacillus thermodenitrificans NG80-2 isolated from a deep-subsurface oil reservoir.</title>
        <authorList>
            <person name="Feng L."/>
            <person name="Wang W."/>
            <person name="Cheng J."/>
            <person name="Ren Y."/>
            <person name="Zhao G."/>
            <person name="Gao C."/>
            <person name="Tang Y."/>
            <person name="Liu X."/>
            <person name="Han W."/>
            <person name="Peng X."/>
            <person name="Liu R."/>
            <person name="Wang L."/>
        </authorList>
    </citation>
    <scope>NUCLEOTIDE SEQUENCE [LARGE SCALE GENOMIC DNA]</scope>
    <source>
        <strain>NG80-2</strain>
    </source>
</reference>
<comment type="function">
    <text evidence="1">Catalyzes the formation of pyridoxal 5'-phosphate from ribose 5-phosphate (RBP), glyceraldehyde 3-phosphate (G3P) and ammonia. The ammonia is provided by the PdxT subunit. Can also use ribulose 5-phosphate and dihydroxyacetone phosphate as substrates, resulting from enzyme-catalyzed isomerization of RBP and G3P, respectively.</text>
</comment>
<comment type="catalytic activity">
    <reaction evidence="1">
        <text>aldehydo-D-ribose 5-phosphate + D-glyceraldehyde 3-phosphate + L-glutamine = pyridoxal 5'-phosphate + L-glutamate + phosphate + 3 H2O + H(+)</text>
        <dbReference type="Rhea" id="RHEA:31507"/>
        <dbReference type="ChEBI" id="CHEBI:15377"/>
        <dbReference type="ChEBI" id="CHEBI:15378"/>
        <dbReference type="ChEBI" id="CHEBI:29985"/>
        <dbReference type="ChEBI" id="CHEBI:43474"/>
        <dbReference type="ChEBI" id="CHEBI:58273"/>
        <dbReference type="ChEBI" id="CHEBI:58359"/>
        <dbReference type="ChEBI" id="CHEBI:59776"/>
        <dbReference type="ChEBI" id="CHEBI:597326"/>
        <dbReference type="EC" id="4.3.3.6"/>
    </reaction>
</comment>
<comment type="pathway">
    <text evidence="1">Cofactor biosynthesis; pyridoxal 5'-phosphate biosynthesis.</text>
</comment>
<comment type="subunit">
    <text evidence="1">In the presence of PdxT, forms a dodecamer of heterodimers.</text>
</comment>
<comment type="similarity">
    <text evidence="1">Belongs to the PdxS/SNZ family.</text>
</comment>
<name>PDXS_GEOTN</name>
<feature type="chain" id="PRO_1000070376" description="Pyridoxal 5'-phosphate synthase subunit PdxS">
    <location>
        <begin position="1"/>
        <end position="294"/>
    </location>
</feature>
<feature type="active site" description="Schiff-base intermediate with D-ribose 5-phosphate" evidence="1">
    <location>
        <position position="81"/>
    </location>
</feature>
<feature type="binding site" evidence="1">
    <location>
        <position position="24"/>
    </location>
    <ligand>
        <name>D-ribose 5-phosphate</name>
        <dbReference type="ChEBI" id="CHEBI:78346"/>
    </ligand>
</feature>
<feature type="binding site" evidence="1">
    <location>
        <position position="153"/>
    </location>
    <ligand>
        <name>D-ribose 5-phosphate</name>
        <dbReference type="ChEBI" id="CHEBI:78346"/>
    </ligand>
</feature>
<feature type="binding site" evidence="1">
    <location>
        <position position="165"/>
    </location>
    <ligand>
        <name>D-glyceraldehyde 3-phosphate</name>
        <dbReference type="ChEBI" id="CHEBI:59776"/>
    </ligand>
</feature>
<feature type="binding site" evidence="1">
    <location>
        <position position="214"/>
    </location>
    <ligand>
        <name>D-ribose 5-phosphate</name>
        <dbReference type="ChEBI" id="CHEBI:78346"/>
    </ligand>
</feature>
<feature type="binding site" evidence="1">
    <location>
        <begin position="235"/>
        <end position="236"/>
    </location>
    <ligand>
        <name>D-ribose 5-phosphate</name>
        <dbReference type="ChEBI" id="CHEBI:78346"/>
    </ligand>
</feature>
<protein>
    <recommendedName>
        <fullName evidence="1">Pyridoxal 5'-phosphate synthase subunit PdxS</fullName>
        <shortName evidence="1">PLP synthase subunit PdxS</shortName>
        <ecNumber evidence="1">4.3.3.6</ecNumber>
    </recommendedName>
    <alternativeName>
        <fullName evidence="1">Pdx1</fullName>
    </alternativeName>
</protein>
<keyword id="KW-0456">Lyase</keyword>
<keyword id="KW-0663">Pyridoxal phosphate</keyword>
<keyword id="KW-0704">Schiff base</keyword>
<accession>A4IJ94</accession>
<proteinExistence type="inferred from homology"/>
<organism>
    <name type="scientific">Geobacillus thermodenitrificans (strain NG80-2)</name>
    <dbReference type="NCBI Taxonomy" id="420246"/>
    <lineage>
        <taxon>Bacteria</taxon>
        <taxon>Bacillati</taxon>
        <taxon>Bacillota</taxon>
        <taxon>Bacilli</taxon>
        <taxon>Bacillales</taxon>
        <taxon>Anoxybacillaceae</taxon>
        <taxon>Geobacillus</taxon>
    </lineage>
</organism>
<evidence type="ECO:0000255" key="1">
    <source>
        <dbReference type="HAMAP-Rule" id="MF_01824"/>
    </source>
</evidence>
<sequence length="294" mass="31596">MALTGTDRVKRGMAEMQKGGVIMDVVNAEQAKIAEAAGAVAVMALERVPADIRAAGGVARMADPTVVEEVMNAVSIPVMAKVRIGHYVEARVLEALGVDYIDESEVLTPADEEFHIDKRQFTVPFVCGCRDLGEAARRIAEGASMLRTKGEPGTGNIVEAVRHMRKVNAQIRKVVSMSEDELVAEAKQLGAPVEVLREIKRIGRLPVVNFAAGGVATPADAALMMHLGADGVFVGSGIFKSENPEKYARAIVEATTHYEDYELIAHLSKGLGGAMRGIDVATLLPEHRMQERGW</sequence>
<gene>
    <name evidence="1" type="primary">pdxS</name>
    <name type="ordered locus">GTNG_0011</name>
</gene>
<dbReference type="EC" id="4.3.3.6" evidence="1"/>
<dbReference type="EMBL" id="CP000557">
    <property type="protein sequence ID" value="ABO65398.1"/>
    <property type="molecule type" value="Genomic_DNA"/>
</dbReference>
<dbReference type="RefSeq" id="WP_008882087.1">
    <property type="nucleotide sequence ID" value="NC_009328.1"/>
</dbReference>
<dbReference type="SMR" id="A4IJ94"/>
<dbReference type="GeneID" id="87622440"/>
<dbReference type="KEGG" id="gtn:GTNG_0011"/>
<dbReference type="eggNOG" id="COG0214">
    <property type="taxonomic scope" value="Bacteria"/>
</dbReference>
<dbReference type="HOGENOM" id="CLU_055352_1_0_9"/>
<dbReference type="UniPathway" id="UPA00245"/>
<dbReference type="Proteomes" id="UP000001578">
    <property type="component" value="Chromosome"/>
</dbReference>
<dbReference type="GO" id="GO:0036381">
    <property type="term" value="F:pyridoxal 5'-phosphate synthase (glutamine hydrolysing) activity"/>
    <property type="evidence" value="ECO:0007669"/>
    <property type="project" value="UniProtKB-UniRule"/>
</dbReference>
<dbReference type="GO" id="GO:0006520">
    <property type="term" value="P:amino acid metabolic process"/>
    <property type="evidence" value="ECO:0007669"/>
    <property type="project" value="TreeGrafter"/>
</dbReference>
<dbReference type="GO" id="GO:0042823">
    <property type="term" value="P:pyridoxal phosphate biosynthetic process"/>
    <property type="evidence" value="ECO:0007669"/>
    <property type="project" value="UniProtKB-UniRule"/>
</dbReference>
<dbReference type="GO" id="GO:0008615">
    <property type="term" value="P:pyridoxine biosynthetic process"/>
    <property type="evidence" value="ECO:0007669"/>
    <property type="project" value="TreeGrafter"/>
</dbReference>
<dbReference type="CDD" id="cd04727">
    <property type="entry name" value="pdxS"/>
    <property type="match status" value="1"/>
</dbReference>
<dbReference type="FunFam" id="3.20.20.70:FF:000001">
    <property type="entry name" value="Pyridoxine biosynthesis protein PDX1"/>
    <property type="match status" value="1"/>
</dbReference>
<dbReference type="Gene3D" id="3.20.20.70">
    <property type="entry name" value="Aldolase class I"/>
    <property type="match status" value="1"/>
</dbReference>
<dbReference type="HAMAP" id="MF_01824">
    <property type="entry name" value="PdxS"/>
    <property type="match status" value="1"/>
</dbReference>
<dbReference type="InterPro" id="IPR013785">
    <property type="entry name" value="Aldolase_TIM"/>
</dbReference>
<dbReference type="InterPro" id="IPR001852">
    <property type="entry name" value="PdxS/SNZ"/>
</dbReference>
<dbReference type="InterPro" id="IPR033755">
    <property type="entry name" value="PdxS/SNZ_N"/>
</dbReference>
<dbReference type="InterPro" id="IPR011060">
    <property type="entry name" value="RibuloseP-bd_barrel"/>
</dbReference>
<dbReference type="NCBIfam" id="NF003215">
    <property type="entry name" value="PRK04180.1"/>
    <property type="match status" value="1"/>
</dbReference>
<dbReference type="NCBIfam" id="TIGR00343">
    <property type="entry name" value="pyridoxal 5'-phosphate synthase lyase subunit PdxS"/>
    <property type="match status" value="1"/>
</dbReference>
<dbReference type="PANTHER" id="PTHR31829">
    <property type="entry name" value="PYRIDOXAL 5'-PHOSPHATE SYNTHASE SUBUNIT SNZ1-RELATED"/>
    <property type="match status" value="1"/>
</dbReference>
<dbReference type="PANTHER" id="PTHR31829:SF0">
    <property type="entry name" value="PYRIDOXAL 5'-PHOSPHATE SYNTHASE SUBUNIT SNZ1-RELATED"/>
    <property type="match status" value="1"/>
</dbReference>
<dbReference type="Pfam" id="PF01680">
    <property type="entry name" value="SOR_SNZ"/>
    <property type="match status" value="1"/>
</dbReference>
<dbReference type="PIRSF" id="PIRSF029271">
    <property type="entry name" value="Pdx1"/>
    <property type="match status" value="1"/>
</dbReference>
<dbReference type="SUPFAM" id="SSF51366">
    <property type="entry name" value="Ribulose-phoshate binding barrel"/>
    <property type="match status" value="1"/>
</dbReference>
<dbReference type="PROSITE" id="PS01235">
    <property type="entry name" value="PDXS_SNZ_1"/>
    <property type="match status" value="1"/>
</dbReference>
<dbReference type="PROSITE" id="PS51129">
    <property type="entry name" value="PDXS_SNZ_2"/>
    <property type="match status" value="1"/>
</dbReference>